<dbReference type="EMBL" id="U87613">
    <property type="protein sequence ID" value="AAC33180.1"/>
    <property type="molecule type" value="Genomic_DNA"/>
</dbReference>
<dbReference type="EMBL" id="AF030334">
    <property type="protein sequence ID" value="AAB84275.1"/>
    <property type="molecule type" value="Genomic_DNA"/>
</dbReference>
<dbReference type="EMBL" id="AE014134">
    <property type="protein sequence ID" value="AAF51518.2"/>
    <property type="molecule type" value="Genomic_DNA"/>
</dbReference>
<dbReference type="EMBL" id="BT053691">
    <property type="protein sequence ID" value="ACK77608.1"/>
    <property type="molecule type" value="mRNA"/>
</dbReference>
<dbReference type="PIR" id="S71804">
    <property type="entry name" value="S71804"/>
</dbReference>
<dbReference type="RefSeq" id="NP_523443.1">
    <property type="nucleotide sequence ID" value="NM_078719.4"/>
</dbReference>
<dbReference type="PDB" id="2MAH">
    <property type="method" value="NMR"/>
    <property type="chains" value="A=85-202"/>
</dbReference>
<dbReference type="PDB" id="8OIJ">
    <property type="method" value="X-ray"/>
    <property type="resolution" value="2.00 A"/>
    <property type="chains" value="C/D=970-1003"/>
</dbReference>
<dbReference type="PDBsum" id="2MAH"/>
<dbReference type="PDBsum" id="8OIJ"/>
<dbReference type="SMR" id="P91682"/>
<dbReference type="BioGRID" id="59452">
    <property type="interactions" value="68"/>
</dbReference>
<dbReference type="DIP" id="DIP-19956N"/>
<dbReference type="FunCoup" id="P91682">
    <property type="interactions" value="513"/>
</dbReference>
<dbReference type="IntAct" id="P91682">
    <property type="interactions" value="9"/>
</dbReference>
<dbReference type="STRING" id="7227.FBpp0077788"/>
<dbReference type="TCDB" id="9.A.14.16.6">
    <property type="family name" value="the g-protein-coupled receptor (gpcr) family"/>
</dbReference>
<dbReference type="GlyCosmos" id="P91682">
    <property type="glycosylation" value="7 sites, No reported glycans"/>
</dbReference>
<dbReference type="GlyGen" id="P91682">
    <property type="glycosylation" value="7 sites"/>
</dbReference>
<dbReference type="iPTMnet" id="P91682"/>
<dbReference type="PaxDb" id="7227-FBpp0077788"/>
<dbReference type="DNASU" id="33196"/>
<dbReference type="EnsemblMetazoa" id="FBtr0078129">
    <property type="protein sequence ID" value="FBpp0077788"/>
    <property type="gene ID" value="FBgn0003444"/>
</dbReference>
<dbReference type="GeneID" id="33196"/>
<dbReference type="KEGG" id="dme:Dmel_CG11561"/>
<dbReference type="UCSC" id="CG11561-RA">
    <property type="organism name" value="d. melanogaster"/>
</dbReference>
<dbReference type="AGR" id="FB:FBgn0003444"/>
<dbReference type="CTD" id="6608"/>
<dbReference type="FlyBase" id="FBgn0003444">
    <property type="gene designation" value="smo"/>
</dbReference>
<dbReference type="VEuPathDB" id="VectorBase:FBgn0003444"/>
<dbReference type="eggNOG" id="KOG3577">
    <property type="taxonomic scope" value="Eukaryota"/>
</dbReference>
<dbReference type="GeneTree" id="ENSGT00940000157206"/>
<dbReference type="HOGENOM" id="CLU_007873_3_0_1"/>
<dbReference type="InParanoid" id="P91682"/>
<dbReference type="OMA" id="HGPRKNS"/>
<dbReference type="OrthoDB" id="10064659at2759"/>
<dbReference type="PhylomeDB" id="P91682"/>
<dbReference type="Reactome" id="R-DME-209214">
    <property type="pathway name" value="Phosphorylation of SMO"/>
</dbReference>
<dbReference type="Reactome" id="R-DME-209338">
    <property type="pathway name" value="Assembly of the 'signalling complexes'"/>
</dbReference>
<dbReference type="Reactome" id="R-DME-216119">
    <property type="pathway name" value="Activation of CI"/>
</dbReference>
<dbReference type="Reactome" id="R-DME-216217">
    <property type="pathway name" value="Activation of SMO"/>
</dbReference>
<dbReference type="Reactome" id="R-DME-5610787">
    <property type="pathway name" value="Hedgehog 'off' state"/>
</dbReference>
<dbReference type="Reactome" id="R-DME-5635838">
    <property type="pathway name" value="Activation of SMO"/>
</dbReference>
<dbReference type="SignaLink" id="P91682"/>
<dbReference type="BioGRID-ORCS" id="33196">
    <property type="hits" value="0 hits in 1 CRISPR screen"/>
</dbReference>
<dbReference type="EvolutionaryTrace" id="P91682"/>
<dbReference type="GenomeRNAi" id="33196"/>
<dbReference type="PRO" id="PR:P91682"/>
<dbReference type="Proteomes" id="UP000000803">
    <property type="component" value="Chromosome 2L"/>
</dbReference>
<dbReference type="Bgee" id="FBgn0003444">
    <property type="expression patterns" value="Expressed in wing disc and 58 other cell types or tissues"/>
</dbReference>
<dbReference type="ExpressionAtlas" id="P91682">
    <property type="expression patterns" value="baseline and differential"/>
</dbReference>
<dbReference type="GO" id="GO:0005929">
    <property type="term" value="C:cilium"/>
    <property type="evidence" value="ECO:0000314"/>
    <property type="project" value="FlyBase"/>
</dbReference>
<dbReference type="GO" id="GO:0030425">
    <property type="term" value="C:dendrite"/>
    <property type="evidence" value="ECO:0000314"/>
    <property type="project" value="FlyBase"/>
</dbReference>
<dbReference type="GO" id="GO:0043025">
    <property type="term" value="C:neuronal cell body"/>
    <property type="evidence" value="ECO:0000314"/>
    <property type="project" value="FlyBase"/>
</dbReference>
<dbReference type="GO" id="GO:0005886">
    <property type="term" value="C:plasma membrane"/>
    <property type="evidence" value="ECO:0000314"/>
    <property type="project" value="FlyBase"/>
</dbReference>
<dbReference type="GO" id="GO:0004930">
    <property type="term" value="F:G protein-coupled receptor activity"/>
    <property type="evidence" value="ECO:0007669"/>
    <property type="project" value="UniProtKB-KW"/>
</dbReference>
<dbReference type="GO" id="GO:0042802">
    <property type="term" value="F:identical protein binding"/>
    <property type="evidence" value="ECO:0000353"/>
    <property type="project" value="IntAct"/>
</dbReference>
<dbReference type="GO" id="GO:0005113">
    <property type="term" value="F:patched binding"/>
    <property type="evidence" value="ECO:0000318"/>
    <property type="project" value="GO_Central"/>
</dbReference>
<dbReference type="GO" id="GO:0070300">
    <property type="term" value="F:phosphatidic acid binding"/>
    <property type="evidence" value="ECO:0000314"/>
    <property type="project" value="FlyBase"/>
</dbReference>
<dbReference type="GO" id="GO:0070273">
    <property type="term" value="F:phosphatidylinositol-4-phosphate binding"/>
    <property type="evidence" value="ECO:0000314"/>
    <property type="project" value="FlyBase"/>
</dbReference>
<dbReference type="GO" id="GO:0042803">
    <property type="term" value="F:protein homodimerization activity"/>
    <property type="evidence" value="ECO:0000314"/>
    <property type="project" value="FlyBase"/>
</dbReference>
<dbReference type="GO" id="GO:0019901">
    <property type="term" value="F:protein kinase binding"/>
    <property type="evidence" value="ECO:0000353"/>
    <property type="project" value="FlyBase"/>
</dbReference>
<dbReference type="GO" id="GO:0007193">
    <property type="term" value="P:adenylate cyclase-inhibiting G protein-coupled receptor signaling pathway"/>
    <property type="evidence" value="ECO:0000315"/>
    <property type="project" value="FlyBase"/>
</dbReference>
<dbReference type="GO" id="GO:0048099">
    <property type="term" value="P:anterior/posterior lineage restriction, imaginal disc"/>
    <property type="evidence" value="ECO:0000304"/>
    <property type="project" value="FlyBase"/>
</dbReference>
<dbReference type="GO" id="GO:0007350">
    <property type="term" value="P:blastoderm segmentation"/>
    <property type="evidence" value="ECO:0000315"/>
    <property type="project" value="FlyBase"/>
</dbReference>
<dbReference type="GO" id="GO:0001746">
    <property type="term" value="P:Bolwig's organ morphogenesis"/>
    <property type="evidence" value="ECO:0000315"/>
    <property type="project" value="FlyBase"/>
</dbReference>
<dbReference type="GO" id="GO:0007417">
    <property type="term" value="P:central nervous system development"/>
    <property type="evidence" value="ECO:0000318"/>
    <property type="project" value="GO_Central"/>
</dbReference>
<dbReference type="GO" id="GO:0071679">
    <property type="term" value="P:commissural neuron axon guidance"/>
    <property type="evidence" value="ECO:0000318"/>
    <property type="project" value="GO_Central"/>
</dbReference>
<dbReference type="GO" id="GO:0001745">
    <property type="term" value="P:compound eye morphogenesis"/>
    <property type="evidence" value="ECO:0000315"/>
    <property type="project" value="FlyBase"/>
</dbReference>
<dbReference type="GO" id="GO:0007455">
    <property type="term" value="P:eye-antennal disc morphogenesis"/>
    <property type="evidence" value="ECO:0000316"/>
    <property type="project" value="FlyBase"/>
</dbReference>
<dbReference type="GO" id="GO:0030707">
    <property type="term" value="P:follicle cell of egg chamber development"/>
    <property type="evidence" value="ECO:0000315"/>
    <property type="project" value="FlyBase"/>
</dbReference>
<dbReference type="GO" id="GO:0007476">
    <property type="term" value="P:imaginal disc-derived wing morphogenesis"/>
    <property type="evidence" value="ECO:0000315"/>
    <property type="project" value="FlyBase"/>
</dbReference>
<dbReference type="GO" id="GO:0002385">
    <property type="term" value="P:mucosal immune response"/>
    <property type="evidence" value="ECO:0000315"/>
    <property type="project" value="FlyBase"/>
</dbReference>
<dbReference type="GO" id="GO:2000134">
    <property type="term" value="P:negative regulation of G1/S transition of mitotic cell cycle"/>
    <property type="evidence" value="ECO:0000315"/>
    <property type="project" value="FlyBase"/>
</dbReference>
<dbReference type="GO" id="GO:0007389">
    <property type="term" value="P:pattern specification process"/>
    <property type="evidence" value="ECO:0000318"/>
    <property type="project" value="GO_Central"/>
</dbReference>
<dbReference type="GO" id="GO:0010628">
    <property type="term" value="P:positive regulation of gene expression"/>
    <property type="evidence" value="ECO:0000315"/>
    <property type="project" value="FlyBase"/>
</dbReference>
<dbReference type="GO" id="GO:1903078">
    <property type="term" value="P:positive regulation of protein localization to plasma membrane"/>
    <property type="evidence" value="ECO:0000314"/>
    <property type="project" value="FlyBase"/>
</dbReference>
<dbReference type="GO" id="GO:0042981">
    <property type="term" value="P:regulation of apoptotic process"/>
    <property type="evidence" value="ECO:0000316"/>
    <property type="project" value="FlyBase"/>
</dbReference>
<dbReference type="GO" id="GO:0007346">
    <property type="term" value="P:regulation of mitotic cell cycle"/>
    <property type="evidence" value="ECO:0000315"/>
    <property type="project" value="FlyBase"/>
</dbReference>
<dbReference type="GO" id="GO:2000736">
    <property type="term" value="P:regulation of stem cell differentiation"/>
    <property type="evidence" value="ECO:0000315"/>
    <property type="project" value="FlyBase"/>
</dbReference>
<dbReference type="GO" id="GO:0007367">
    <property type="term" value="P:segment polarity determination"/>
    <property type="evidence" value="ECO:0000315"/>
    <property type="project" value="FlyBase"/>
</dbReference>
<dbReference type="GO" id="GO:0007224">
    <property type="term" value="P:smoothened signaling pathway"/>
    <property type="evidence" value="ECO:0000314"/>
    <property type="project" value="FlyBase"/>
</dbReference>
<dbReference type="GO" id="GO:0035019">
    <property type="term" value="P:somatic stem cell population maintenance"/>
    <property type="evidence" value="ECO:0000315"/>
    <property type="project" value="FlyBase"/>
</dbReference>
<dbReference type="GO" id="GO:0048100">
    <property type="term" value="P:wing disc anterior/posterior pattern formation"/>
    <property type="evidence" value="ECO:0000304"/>
    <property type="project" value="FlyBase"/>
</dbReference>
<dbReference type="CDD" id="cd15030">
    <property type="entry name" value="7tmF_SMO_homolog"/>
    <property type="match status" value="1"/>
</dbReference>
<dbReference type="CDD" id="cd07451">
    <property type="entry name" value="CRD_SMO"/>
    <property type="match status" value="1"/>
</dbReference>
<dbReference type="FunFam" id="1.10.2000.10:FF:000021">
    <property type="entry name" value="Blast:Protein smoothened"/>
    <property type="match status" value="1"/>
</dbReference>
<dbReference type="FunFam" id="1.20.1070.10:FF:000068">
    <property type="entry name" value="Smoothened, frizzled class receptor"/>
    <property type="match status" value="1"/>
</dbReference>
<dbReference type="Gene3D" id="1.10.2000.10">
    <property type="entry name" value="Frizzled cysteine-rich domain"/>
    <property type="match status" value="1"/>
</dbReference>
<dbReference type="Gene3D" id="1.20.1070.10">
    <property type="entry name" value="Rhodopsin 7-helix transmembrane proteins"/>
    <property type="match status" value="1"/>
</dbReference>
<dbReference type="InterPro" id="IPR015526">
    <property type="entry name" value="Frizzled/SFRP"/>
</dbReference>
<dbReference type="InterPro" id="IPR000539">
    <property type="entry name" value="Frizzled/Smoothened_7TM"/>
</dbReference>
<dbReference type="InterPro" id="IPR020067">
    <property type="entry name" value="Frizzled_dom"/>
</dbReference>
<dbReference type="InterPro" id="IPR036790">
    <property type="entry name" value="Frizzled_dom_sf"/>
</dbReference>
<dbReference type="InterPro" id="IPR017981">
    <property type="entry name" value="GPCR_2-like_7TM"/>
</dbReference>
<dbReference type="InterPro" id="IPR035683">
    <property type="entry name" value="SMO_7TM"/>
</dbReference>
<dbReference type="InterPro" id="IPR041771">
    <property type="entry name" value="SMO_CRD"/>
</dbReference>
<dbReference type="PANTHER" id="PTHR11309">
    <property type="entry name" value="FRIZZLED"/>
    <property type="match status" value="1"/>
</dbReference>
<dbReference type="PANTHER" id="PTHR11309:SF35">
    <property type="entry name" value="PROTEIN SMOOTHENED"/>
    <property type="match status" value="1"/>
</dbReference>
<dbReference type="Pfam" id="PF01534">
    <property type="entry name" value="Frizzled"/>
    <property type="match status" value="1"/>
</dbReference>
<dbReference type="Pfam" id="PF01392">
    <property type="entry name" value="Fz"/>
    <property type="match status" value="1"/>
</dbReference>
<dbReference type="PRINTS" id="PR00489">
    <property type="entry name" value="FRIZZLED"/>
</dbReference>
<dbReference type="SMART" id="SM00063">
    <property type="entry name" value="FRI"/>
    <property type="match status" value="1"/>
</dbReference>
<dbReference type="SMART" id="SM01330">
    <property type="entry name" value="Frizzled"/>
    <property type="match status" value="1"/>
</dbReference>
<dbReference type="SUPFAM" id="SSF63501">
    <property type="entry name" value="Frizzled cysteine-rich domain"/>
    <property type="match status" value="1"/>
</dbReference>
<dbReference type="PROSITE" id="PS50038">
    <property type="entry name" value="FZ"/>
    <property type="match status" value="1"/>
</dbReference>
<dbReference type="PROSITE" id="PS50261">
    <property type="entry name" value="G_PROTEIN_RECEP_F2_4"/>
    <property type="match status" value="1"/>
</dbReference>
<accession>P91682</accession>
<accession>B7FNK1</accession>
<accession>Q9VPM8</accession>
<keyword id="KW-0002">3D-structure</keyword>
<keyword id="KW-1003">Cell membrane</keyword>
<keyword id="KW-0966">Cell projection</keyword>
<keyword id="KW-0217">Developmental protein</keyword>
<keyword id="KW-1015">Disulfide bond</keyword>
<keyword id="KW-0297">G-protein coupled receptor</keyword>
<keyword id="KW-0325">Glycoprotein</keyword>
<keyword id="KW-0472">Membrane</keyword>
<keyword id="KW-0597">Phosphoprotein</keyword>
<keyword id="KW-0675">Receptor</keyword>
<keyword id="KW-1185">Reference proteome</keyword>
<keyword id="KW-0732">Signal</keyword>
<keyword id="KW-0807">Transducer</keyword>
<keyword id="KW-0812">Transmembrane</keyword>
<keyword id="KW-1133">Transmembrane helix</keyword>
<evidence type="ECO:0000250" key="1">
    <source>
        <dbReference type="UniProtKB" id="Q99835"/>
    </source>
</evidence>
<evidence type="ECO:0000255" key="2"/>
<evidence type="ECO:0000255" key="3">
    <source>
        <dbReference type="PROSITE-ProRule" id="PRU00090"/>
    </source>
</evidence>
<evidence type="ECO:0000256" key="4">
    <source>
        <dbReference type="SAM" id="MobiDB-lite"/>
    </source>
</evidence>
<evidence type="ECO:0000269" key="5">
    <source>
    </source>
</evidence>
<evidence type="ECO:0000269" key="6">
    <source>
    </source>
</evidence>
<evidence type="ECO:0000269" key="7">
    <source>
    </source>
</evidence>
<evidence type="ECO:0000269" key="8">
    <source>
    </source>
</evidence>
<evidence type="ECO:0000269" key="9">
    <source>
    </source>
</evidence>
<evidence type="ECO:0000269" key="10">
    <source>
    </source>
</evidence>
<evidence type="ECO:0000305" key="11"/>
<evidence type="ECO:0007744" key="12">
    <source>
        <dbReference type="PDB" id="2MAH"/>
    </source>
</evidence>
<evidence type="ECO:0007829" key="13">
    <source>
        <dbReference type="PDB" id="2MAH"/>
    </source>
</evidence>
<evidence type="ECO:0007829" key="14">
    <source>
        <dbReference type="PDB" id="8OIJ"/>
    </source>
</evidence>
<protein>
    <recommendedName>
        <fullName>Protein smoothened</fullName>
        <shortName>dSMO</shortName>
    </recommendedName>
    <alternativeName>
        <fullName>SMOH</fullName>
    </alternativeName>
    <alternativeName>
        <fullName>Smooth</fullName>
    </alternativeName>
</protein>
<gene>
    <name type="primary">smo</name>
    <name type="ORF">CG11561</name>
</gene>
<sequence>MQYLNFPRMPNIMMFLEVAILCLWVVADASASSAKFGSTTPASAQQSDVELEPINGTLNYRLYAKKGRDDKPWFDGLDSRHIQCVRRARCYPTSNATNTCFGSKLPYELSSLDLTDFHTEKELNDKLNDYYALKHVPKCWAAIQPFLCAVFKPKCEKINGEDMVYLPSYEMCRITMEPCRILYNTTFFPKFLRCNETLFPTKCTNGARGMKFNGTGQCLSPLVPTDTSASYYPGIEGCGVRCKDPLYTDDEHRQIHKLIGWAGSICLLSNLFVVSTFFIDWKNANKYPAVIVFYINLCFLIACVGWLLQFTSGSREDIVCRKDGTLRHSEPTAGENLSCIVIFVLVYYFLTAGMVWFVFLTYAWHWRAMGHVQDRIDKKGSYFHLVAWSLPLVLTITTMAFSEVDGNSIVGICFVGYINHSMRAGLLLGPLCGVILIGGYFITRGMVMLFGLKHFANDIKSTSASNKIHLIIMRMGVCALLTLVFILVAIACHVTEFRHADEWAQSFRQFIICKISSVFEEKSSCRIENRPSVGVLQLHLLCLFSSGIVMSTWCWTPSSIETWKRYIRKKCGKEVVEEVKMPKHKVIAQTWAKRKDFEDKGRLSITLYNTHTDPVGLNFDVNDLNSSETNDISSTWAAYLPQCVKRRMALTGAATGNSSSHGPRKNSLDSEISVSVRHVSVESRRNSVDSQVSVKIAEMKTKVASRSRGKHGGSSSNRRTQRRRDYIAAATGKSSRRRESSTSVESQVIALKKTTYPNASHKVGVFAHHSSKKQHNYTSSMKRRTANAGLDPSILNEFLQKNGDFIFPFLQNQDMSSSSEEDNSRASQKIQDLNVVVKQQEISEDDHDGIKIEELPNSKQVALENFLKNIKKSNESNSNRHSRNSARSQSKKSQKRHLKNPAADLDFRKDCVKYRSNDSLSCSSEELDVALDVGSLLNSSFSGISMGKPHSRNSKTSCDVGIQANPFELVPSYGEDELQQAMRLLNAASRQRTEAANEDFGGTELQGLLGHSHRHQREPTFMSESDKLKMLLLPSK</sequence>
<feature type="signal peptide" evidence="2">
    <location>
        <begin position="1"/>
        <end position="31"/>
    </location>
</feature>
<feature type="chain" id="PRO_0000013019" description="Protein smoothened">
    <location>
        <begin position="32"/>
        <end position="1036"/>
    </location>
</feature>
<feature type="topological domain" description="Extracellular" evidence="2">
    <location>
        <begin position="32"/>
        <end position="258"/>
    </location>
</feature>
<feature type="transmembrane region" description="Helical; Name=1" evidence="2">
    <location>
        <begin position="259"/>
        <end position="279"/>
    </location>
</feature>
<feature type="topological domain" description="Cytoplasmic" evidence="2">
    <location>
        <begin position="280"/>
        <end position="287"/>
    </location>
</feature>
<feature type="transmembrane region" description="Helical; Name=2" evidence="2">
    <location>
        <begin position="288"/>
        <end position="308"/>
    </location>
</feature>
<feature type="topological domain" description="Extracellular" evidence="2">
    <location>
        <begin position="309"/>
        <end position="339"/>
    </location>
</feature>
<feature type="transmembrane region" description="Helical; Name=3" evidence="2">
    <location>
        <begin position="340"/>
        <end position="360"/>
    </location>
</feature>
<feature type="topological domain" description="Cytoplasmic" evidence="2">
    <location>
        <begin position="361"/>
        <end position="381"/>
    </location>
</feature>
<feature type="transmembrane region" description="Helical; Name=4" evidence="2">
    <location>
        <begin position="382"/>
        <end position="402"/>
    </location>
</feature>
<feature type="topological domain" description="Extracellular" evidence="2">
    <location>
        <begin position="403"/>
        <end position="421"/>
    </location>
</feature>
<feature type="transmembrane region" description="Helical; Name=5" evidence="2">
    <location>
        <begin position="422"/>
        <end position="442"/>
    </location>
</feature>
<feature type="topological domain" description="Cytoplasmic" evidence="2">
    <location>
        <begin position="443"/>
        <end position="469"/>
    </location>
</feature>
<feature type="transmembrane region" description="Helical; Name=6" evidence="2">
    <location>
        <begin position="470"/>
        <end position="490"/>
    </location>
</feature>
<feature type="topological domain" description="Extracellular" evidence="2">
    <location>
        <begin position="491"/>
        <end position="532"/>
    </location>
</feature>
<feature type="transmembrane region" description="Helical; Name=7" evidence="2">
    <location>
        <begin position="533"/>
        <end position="553"/>
    </location>
</feature>
<feature type="topological domain" description="Cytoplasmic" evidence="2">
    <location>
        <begin position="554"/>
        <end position="1036"/>
    </location>
</feature>
<feature type="domain" description="FZ" evidence="3">
    <location>
        <begin position="85"/>
        <end position="206"/>
    </location>
</feature>
<feature type="region of interest" description="Disordered" evidence="4">
    <location>
        <begin position="678"/>
        <end position="745"/>
    </location>
</feature>
<feature type="region of interest" description="Disordered" evidence="4">
    <location>
        <begin position="870"/>
        <end position="902"/>
    </location>
</feature>
<feature type="compositionally biased region" description="Basic residues" evidence="4">
    <location>
        <begin position="880"/>
        <end position="899"/>
    </location>
</feature>
<feature type="modified residue" description="Phosphoserine" evidence="7">
    <location>
        <position position="658"/>
    </location>
</feature>
<feature type="modified residue" description="Phosphoserine" evidence="7">
    <location>
        <position position="659"/>
    </location>
</feature>
<feature type="modified residue" description="Phosphoserine" evidence="7">
    <location>
        <position position="667"/>
    </location>
</feature>
<feature type="modified residue" description="Phosphoserine" evidence="7">
    <location>
        <position position="670"/>
    </location>
</feature>
<feature type="modified residue" description="Phosphoserine" evidence="7">
    <location>
        <position position="673"/>
    </location>
</feature>
<feature type="modified residue" description="Phosphoserine" evidence="7">
    <location>
        <position position="687"/>
    </location>
</feature>
<feature type="modified residue" description="Phosphoserine" evidence="7">
    <location>
        <position position="690"/>
    </location>
</feature>
<feature type="modified residue" description="Phosphoserine" evidence="7">
    <location>
        <position position="693"/>
    </location>
</feature>
<feature type="glycosylation site" description="N-linked (GlcNAc...) asparagine" evidence="2">
    <location>
        <position position="55"/>
    </location>
</feature>
<feature type="glycosylation site" description="N-linked (GlcNAc...) asparagine" evidence="2">
    <location>
        <position position="95"/>
    </location>
</feature>
<feature type="glycosylation site" description="N-linked (GlcNAc...) asparagine" evidence="2">
    <location>
        <position position="184"/>
    </location>
</feature>
<feature type="glycosylation site" description="N-linked (GlcNAc...) asparagine" evidence="2">
    <location>
        <position position="195"/>
    </location>
</feature>
<feature type="glycosylation site" description="N-linked (GlcNAc...) asparagine" evidence="2">
    <location>
        <position position="213"/>
    </location>
</feature>
<feature type="glycosylation site" description="N-linked (GlcNAc...) asparagine" evidence="2">
    <location>
        <position position="336"/>
    </location>
</feature>
<feature type="glycosylation site" description="N-linked (GlcNAc...) asparagine" evidence="2">
    <location>
        <position position="419"/>
    </location>
</feature>
<feature type="disulfide bond" evidence="3 8 12">
    <location>
        <begin position="90"/>
        <end position="155"/>
    </location>
</feature>
<feature type="disulfide bond" evidence="3 8 12">
    <location>
        <begin position="100"/>
        <end position="148"/>
    </location>
</feature>
<feature type="disulfide bond" evidence="3 8 12">
    <location>
        <begin position="139"/>
        <end position="179"/>
    </location>
</feature>
<feature type="disulfide bond" evidence="3 8 12">
    <location>
        <begin position="172"/>
        <end position="194"/>
    </location>
</feature>
<feature type="disulfide bond" evidence="1">
    <location>
        <begin position="218"/>
        <end position="238"/>
    </location>
</feature>
<feature type="disulfide bond" evidence="1">
    <location>
        <begin position="242"/>
        <end position="320"/>
    </location>
</feature>
<feature type="disulfide bond" evidence="1">
    <location>
        <begin position="339"/>
        <end position="413"/>
    </location>
</feature>
<feature type="disulfide bond" evidence="1">
    <location>
        <begin position="513"/>
        <end position="525"/>
    </location>
</feature>
<feature type="strand" evidence="13">
    <location>
        <begin position="94"/>
        <end position="96"/>
    </location>
</feature>
<feature type="strand" evidence="13">
    <location>
        <begin position="108"/>
        <end position="110"/>
    </location>
</feature>
<feature type="helix" evidence="13">
    <location>
        <begin position="112"/>
        <end position="114"/>
    </location>
</feature>
<feature type="helix" evidence="13">
    <location>
        <begin position="120"/>
        <end position="131"/>
    </location>
</feature>
<feature type="helix" evidence="13">
    <location>
        <begin position="132"/>
        <end position="135"/>
    </location>
</feature>
<feature type="helix" evidence="13">
    <location>
        <begin position="137"/>
        <end position="140"/>
    </location>
</feature>
<feature type="helix" evidence="13">
    <location>
        <begin position="146"/>
        <end position="151"/>
    </location>
</feature>
<feature type="strand" evidence="13">
    <location>
        <begin position="156"/>
        <end position="160"/>
    </location>
</feature>
<feature type="strand" evidence="13">
    <location>
        <begin position="162"/>
        <end position="165"/>
    </location>
</feature>
<feature type="helix" evidence="13">
    <location>
        <begin position="169"/>
        <end position="176"/>
    </location>
</feature>
<feature type="helix" evidence="13">
    <location>
        <begin position="180"/>
        <end position="182"/>
    </location>
</feature>
<feature type="helix" evidence="13">
    <location>
        <begin position="189"/>
        <end position="192"/>
    </location>
</feature>
<feature type="helix" evidence="14">
    <location>
        <begin position="977"/>
        <end position="988"/>
    </location>
</feature>
<reference key="1">
    <citation type="journal article" date="1996" name="Cell">
        <title>The Drosophila smoothened gene encodes a seven-pass membrane protein, a putative receptor for the hedgehog signal.</title>
        <authorList>
            <person name="Alcedo J."/>
            <person name="Ayzenzon M."/>
            <person name="von Ohlen T."/>
            <person name="Noll M."/>
            <person name="Hooper J.E."/>
        </authorList>
    </citation>
    <scope>NUCLEOTIDE SEQUENCE [GENOMIC DNA]</scope>
</reference>
<reference key="2">
    <citation type="journal article" date="1996" name="Nature">
        <title>smoothened encodes a receptor-like serpentine protein required for hedgehog signalling.</title>
        <authorList>
            <person name="van den Heuvel M."/>
            <person name="Ingham P.W."/>
        </authorList>
    </citation>
    <scope>NUCLEOTIDE SEQUENCE [GENOMIC DNA]</scope>
</reference>
<reference key="3">
    <citation type="journal article" date="2000" name="Science">
        <title>The genome sequence of Drosophila melanogaster.</title>
        <authorList>
            <person name="Adams M.D."/>
            <person name="Celniker S.E."/>
            <person name="Holt R.A."/>
            <person name="Evans C.A."/>
            <person name="Gocayne J.D."/>
            <person name="Amanatides P.G."/>
            <person name="Scherer S.E."/>
            <person name="Li P.W."/>
            <person name="Hoskins R.A."/>
            <person name="Galle R.F."/>
            <person name="George R.A."/>
            <person name="Lewis S.E."/>
            <person name="Richards S."/>
            <person name="Ashburner M."/>
            <person name="Henderson S.N."/>
            <person name="Sutton G.G."/>
            <person name="Wortman J.R."/>
            <person name="Yandell M.D."/>
            <person name="Zhang Q."/>
            <person name="Chen L.X."/>
            <person name="Brandon R.C."/>
            <person name="Rogers Y.-H.C."/>
            <person name="Blazej R.G."/>
            <person name="Champe M."/>
            <person name="Pfeiffer B.D."/>
            <person name="Wan K.H."/>
            <person name="Doyle C."/>
            <person name="Baxter E.G."/>
            <person name="Helt G."/>
            <person name="Nelson C.R."/>
            <person name="Miklos G.L.G."/>
            <person name="Abril J.F."/>
            <person name="Agbayani A."/>
            <person name="An H.-J."/>
            <person name="Andrews-Pfannkoch C."/>
            <person name="Baldwin D."/>
            <person name="Ballew R.M."/>
            <person name="Basu A."/>
            <person name="Baxendale J."/>
            <person name="Bayraktaroglu L."/>
            <person name="Beasley E.M."/>
            <person name="Beeson K.Y."/>
            <person name="Benos P.V."/>
            <person name="Berman B.P."/>
            <person name="Bhandari D."/>
            <person name="Bolshakov S."/>
            <person name="Borkova D."/>
            <person name="Botchan M.R."/>
            <person name="Bouck J."/>
            <person name="Brokstein P."/>
            <person name="Brottier P."/>
            <person name="Burtis K.C."/>
            <person name="Busam D.A."/>
            <person name="Butler H."/>
            <person name="Cadieu E."/>
            <person name="Center A."/>
            <person name="Chandra I."/>
            <person name="Cherry J.M."/>
            <person name="Cawley S."/>
            <person name="Dahlke C."/>
            <person name="Davenport L.B."/>
            <person name="Davies P."/>
            <person name="de Pablos B."/>
            <person name="Delcher A."/>
            <person name="Deng Z."/>
            <person name="Mays A.D."/>
            <person name="Dew I."/>
            <person name="Dietz S.M."/>
            <person name="Dodson K."/>
            <person name="Doup L.E."/>
            <person name="Downes M."/>
            <person name="Dugan-Rocha S."/>
            <person name="Dunkov B.C."/>
            <person name="Dunn P."/>
            <person name="Durbin K.J."/>
            <person name="Evangelista C.C."/>
            <person name="Ferraz C."/>
            <person name="Ferriera S."/>
            <person name="Fleischmann W."/>
            <person name="Fosler C."/>
            <person name="Gabrielian A.E."/>
            <person name="Garg N.S."/>
            <person name="Gelbart W.M."/>
            <person name="Glasser K."/>
            <person name="Glodek A."/>
            <person name="Gong F."/>
            <person name="Gorrell J.H."/>
            <person name="Gu Z."/>
            <person name="Guan P."/>
            <person name="Harris M."/>
            <person name="Harris N.L."/>
            <person name="Harvey D.A."/>
            <person name="Heiman T.J."/>
            <person name="Hernandez J.R."/>
            <person name="Houck J."/>
            <person name="Hostin D."/>
            <person name="Houston K.A."/>
            <person name="Howland T.J."/>
            <person name="Wei M.-H."/>
            <person name="Ibegwam C."/>
            <person name="Jalali M."/>
            <person name="Kalush F."/>
            <person name="Karpen G.H."/>
            <person name="Ke Z."/>
            <person name="Kennison J.A."/>
            <person name="Ketchum K.A."/>
            <person name="Kimmel B.E."/>
            <person name="Kodira C.D."/>
            <person name="Kraft C.L."/>
            <person name="Kravitz S."/>
            <person name="Kulp D."/>
            <person name="Lai Z."/>
            <person name="Lasko P."/>
            <person name="Lei Y."/>
            <person name="Levitsky A.A."/>
            <person name="Li J.H."/>
            <person name="Li Z."/>
            <person name="Liang Y."/>
            <person name="Lin X."/>
            <person name="Liu X."/>
            <person name="Mattei B."/>
            <person name="McIntosh T.C."/>
            <person name="McLeod M.P."/>
            <person name="McPherson D."/>
            <person name="Merkulov G."/>
            <person name="Milshina N.V."/>
            <person name="Mobarry C."/>
            <person name="Morris J."/>
            <person name="Moshrefi A."/>
            <person name="Mount S.M."/>
            <person name="Moy M."/>
            <person name="Murphy B."/>
            <person name="Murphy L."/>
            <person name="Muzny D.M."/>
            <person name="Nelson D.L."/>
            <person name="Nelson D.R."/>
            <person name="Nelson K.A."/>
            <person name="Nixon K."/>
            <person name="Nusskern D.R."/>
            <person name="Pacleb J.M."/>
            <person name="Palazzolo M."/>
            <person name="Pittman G.S."/>
            <person name="Pan S."/>
            <person name="Pollard J."/>
            <person name="Puri V."/>
            <person name="Reese M.G."/>
            <person name="Reinert K."/>
            <person name="Remington K."/>
            <person name="Saunders R.D.C."/>
            <person name="Scheeler F."/>
            <person name="Shen H."/>
            <person name="Shue B.C."/>
            <person name="Siden-Kiamos I."/>
            <person name="Simpson M."/>
            <person name="Skupski M.P."/>
            <person name="Smith T.J."/>
            <person name="Spier E."/>
            <person name="Spradling A.C."/>
            <person name="Stapleton M."/>
            <person name="Strong R."/>
            <person name="Sun E."/>
            <person name="Svirskas R."/>
            <person name="Tector C."/>
            <person name="Turner R."/>
            <person name="Venter E."/>
            <person name="Wang A.H."/>
            <person name="Wang X."/>
            <person name="Wang Z.-Y."/>
            <person name="Wassarman D.A."/>
            <person name="Weinstock G.M."/>
            <person name="Weissenbach J."/>
            <person name="Williams S.M."/>
            <person name="Woodage T."/>
            <person name="Worley K.C."/>
            <person name="Wu D."/>
            <person name="Yang S."/>
            <person name="Yao Q.A."/>
            <person name="Ye J."/>
            <person name="Yeh R.-F."/>
            <person name="Zaveri J.S."/>
            <person name="Zhan M."/>
            <person name="Zhang G."/>
            <person name="Zhao Q."/>
            <person name="Zheng L."/>
            <person name="Zheng X.H."/>
            <person name="Zhong F.N."/>
            <person name="Zhong W."/>
            <person name="Zhou X."/>
            <person name="Zhu S.C."/>
            <person name="Zhu X."/>
            <person name="Smith H.O."/>
            <person name="Gibbs R.A."/>
            <person name="Myers E.W."/>
            <person name="Rubin G.M."/>
            <person name="Venter J.C."/>
        </authorList>
    </citation>
    <scope>NUCLEOTIDE SEQUENCE [LARGE SCALE GENOMIC DNA]</scope>
    <source>
        <strain>Berkeley</strain>
    </source>
</reference>
<reference key="4">
    <citation type="journal article" date="2002" name="Genome Biol.">
        <title>Annotation of the Drosophila melanogaster euchromatic genome: a systematic review.</title>
        <authorList>
            <person name="Misra S."/>
            <person name="Crosby M.A."/>
            <person name="Mungall C.J."/>
            <person name="Matthews B.B."/>
            <person name="Campbell K.S."/>
            <person name="Hradecky P."/>
            <person name="Huang Y."/>
            <person name="Kaminker J.S."/>
            <person name="Millburn G.H."/>
            <person name="Prochnik S.E."/>
            <person name="Smith C.D."/>
            <person name="Tupy J.L."/>
            <person name="Whitfield E.J."/>
            <person name="Bayraktaroglu L."/>
            <person name="Berman B.P."/>
            <person name="Bettencourt B.R."/>
            <person name="Celniker S.E."/>
            <person name="de Grey A.D.N.J."/>
            <person name="Drysdale R.A."/>
            <person name="Harris N.L."/>
            <person name="Richter J."/>
            <person name="Russo S."/>
            <person name="Schroeder A.J."/>
            <person name="Shu S.Q."/>
            <person name="Stapleton M."/>
            <person name="Yamada C."/>
            <person name="Ashburner M."/>
            <person name="Gelbart W.M."/>
            <person name="Rubin G.M."/>
            <person name="Lewis S.E."/>
        </authorList>
    </citation>
    <scope>GENOME REANNOTATION</scope>
    <source>
        <strain>Berkeley</strain>
    </source>
</reference>
<reference key="5">
    <citation type="submission" date="2008-12" db="EMBL/GenBank/DDBJ databases">
        <authorList>
            <person name="Carlson J.W."/>
            <person name="Booth B."/>
            <person name="Frise E."/>
            <person name="Park S."/>
            <person name="Wan K.H."/>
            <person name="Yu C."/>
            <person name="Celniker S.E."/>
        </authorList>
    </citation>
    <scope>NUCLEOTIDE SEQUENCE [LARGE SCALE MRNA]</scope>
    <source>
        <strain>Berkeley</strain>
    </source>
</reference>
<reference key="6">
    <citation type="journal article" date="2004" name="Nature">
        <title>Hedgehog signalling activity of Smoothened requires phosphorylation by protein kinase A and casein kinase I.</title>
        <authorList>
            <person name="Jia J."/>
            <person name="Tong C."/>
            <person name="Wang B."/>
            <person name="Luo L."/>
            <person name="Jiang J."/>
        </authorList>
    </citation>
    <scope>SUBCELLULAR LOCATION</scope>
    <scope>PHOSPHORYLATION</scope>
</reference>
<reference key="7">
    <citation type="journal article" date="2005" name="Dev. Cell">
        <title>Hedgehog-regulated Costal2-kinase complexes control phosphorylation and proteolytic processing of Cubitus interruptus.</title>
        <authorList>
            <person name="Zhang W."/>
            <person name="Zhao Y."/>
            <person name="Tong C."/>
            <person name="Wang G."/>
            <person name="Wang B."/>
            <person name="Jia J."/>
            <person name="Jiang J."/>
        </authorList>
    </citation>
    <scope>INTERACTION WITH COS</scope>
</reference>
<reference key="8">
    <citation type="journal article" date="2008" name="J. Proteome Res.">
        <title>Phosphoproteome analysis of Drosophila melanogaster embryos.</title>
        <authorList>
            <person name="Zhai B."/>
            <person name="Villen J."/>
            <person name="Beausoleil S.A."/>
            <person name="Mintseris J."/>
            <person name="Gygi S.P."/>
        </authorList>
    </citation>
    <scope>PHOSPHORYLATION [LARGE SCALE ANALYSIS] AT SER-658; SER-659; SER-667; SER-670; SER-673; SER-687; SER-690 AND SER-693</scope>
    <scope>IDENTIFICATION BY MASS SPECTROMETRY</scope>
    <source>
        <tissue>Embryo</tissue>
    </source>
</reference>
<reference key="9">
    <citation type="journal article" date="2014" name="Cell Rep.">
        <title>Cilia-mediated hedgehog signaling in Drosophila.</title>
        <authorList>
            <person name="Kuzhandaivel A."/>
            <person name="Schultz S.W."/>
            <person name="Alkhori L."/>
            <person name="Alenius M."/>
        </authorList>
    </citation>
    <scope>SUBCELLULAR LOCATION</scope>
    <scope>TISSUE SPECIFICITY</scope>
</reference>
<reference key="10">
    <citation type="journal article" date="2015" name="Cell Host Microbe">
        <title>Bacterial uracil modulates Drosophila DUOX-dependent gut immunity via Hedgehog-induced signaling endosomes.</title>
        <authorList>
            <person name="Lee K.A."/>
            <person name="Kim B."/>
            <person name="Bhin J."/>
            <person name="Kim D.H."/>
            <person name="You H."/>
            <person name="Kim E.K."/>
            <person name="Kim S.H."/>
            <person name="Ryu J.H."/>
            <person name="Hwang D."/>
            <person name="Lee W.J."/>
        </authorList>
    </citation>
    <scope>FUNCTION</scope>
    <scope>DISRUPTION PHENOTYPE</scope>
</reference>
<reference evidence="12" key="11">
    <citation type="journal article" date="2013" name="Nat. Commun.">
        <title>Structural insights into the role of the Smoothened cysteine-rich domain in Hedgehog signalling.</title>
        <authorList>
            <person name="Rana R."/>
            <person name="Carroll C.E."/>
            <person name="Lee H.J."/>
            <person name="Bao J."/>
            <person name="Marada S."/>
            <person name="Grace C.R."/>
            <person name="Guibao C.D."/>
            <person name="Ogden S.K."/>
            <person name="Zheng J.J."/>
        </authorList>
    </citation>
    <scope>STRUCTURE BY NMR OF 85-202</scope>
    <scope>DISULFIDE BONDS</scope>
</reference>
<proteinExistence type="evidence at protein level"/>
<comment type="function">
    <text>Segment polarity protein required for correct patterning of every segment. G protein-coupled receptor which associates with the patched protein (ptc) to transduce the hedgehog (hh) signal through the activation of an inhibitory G-protein. In the absence of hh, ptc represses the constitutive signaling activity of smo through fused (fu). Essential component of a hh-signaling pathway which regulates the Duox-dependent gut immune response to bacterial uracil; required to activate Cad99C-dependent endosome formation, norpA-dependent Ca2+ mobilization and p38 MAPK, which are essential steps in the Duox-dependent production of reactive oxygen species (ROS) in response to intestinal bacterial infection (PubMed:25639794).</text>
</comment>
<comment type="subunit">
    <text evidence="6">Interacts with cos.</text>
</comment>
<comment type="interaction">
    <interactant intactId="EBI-142245">
        <id>P91682</id>
    </interactant>
    <interactant intactId="EBI-102069">
        <id>O16844</id>
        <label>cos</label>
    </interactant>
    <organismsDiffer>false</organismsDiffer>
    <experiments>6</experiments>
</comment>
<comment type="interaction">
    <interactant intactId="EBI-142245">
        <id>P91682</id>
    </interactant>
    <interactant intactId="EBI-142245">
        <id>P91682</id>
        <label>smo</label>
    </interactant>
    <organismsDiffer>false</organismsDiffer>
    <experiments>8</experiments>
</comment>
<comment type="interaction">
    <interactant intactId="EBI-142245">
        <id>P91682</id>
    </interactant>
    <interactant intactId="EBI-86340">
        <id>P68198</id>
        <label>Ubi-p63E</label>
    </interactant>
    <organismsDiffer>false</organismsDiffer>
    <experiments>4</experiments>
</comment>
<comment type="interaction">
    <interactant intactId="EBI-142245">
        <id>P91682</id>
    </interactant>
    <interactant intactId="EBI-153542">
        <id>Q9VDD8</id>
        <label>Usp8</label>
    </interactant>
    <organismsDiffer>false</organismsDiffer>
    <experiments>4</experiments>
</comment>
<comment type="subcellular location">
    <subcellularLocation>
        <location evidence="5">Cell membrane</location>
        <topology evidence="2">Multi-pass membrane protein</topology>
    </subcellularLocation>
    <subcellularLocation>
        <location evidence="9">Cell projection</location>
        <location evidence="9">Cilium</location>
    </subcellularLocation>
</comment>
<comment type="tissue specificity">
    <text evidence="9">Expressed in olfactory sensory neurons (at protein level).</text>
</comment>
<comment type="developmental stage">
    <text>Expressed at all developmental stages, though the levels vary.</text>
</comment>
<comment type="PTM">
    <text evidence="5">Phosphorylation by CkIalpha and PKA regulates smo accumulation at the cell surface and its signaling activity in response to hh.</text>
</comment>
<comment type="disruption phenotype">
    <text evidence="10">RNAi-mediated knockdown severely reduces adult survival following the ingestion of E.carotovora. Abolishes Cad99C-dependent formation of endosomes and DUOX-dependent up-regulation of reactive oxygen species (ROS) in the intestines of adults fed bacteria-derived uracil.</text>
</comment>
<comment type="similarity">
    <text evidence="11">Belongs to the G-protein coupled receptor Fz/Smo family.</text>
</comment>
<comment type="caution">
    <text evidence="11">It is uncertain whether Met-1, Met-9, Met-13 or Met-14 is the initiator.</text>
</comment>
<organism>
    <name type="scientific">Drosophila melanogaster</name>
    <name type="common">Fruit fly</name>
    <dbReference type="NCBI Taxonomy" id="7227"/>
    <lineage>
        <taxon>Eukaryota</taxon>
        <taxon>Metazoa</taxon>
        <taxon>Ecdysozoa</taxon>
        <taxon>Arthropoda</taxon>
        <taxon>Hexapoda</taxon>
        <taxon>Insecta</taxon>
        <taxon>Pterygota</taxon>
        <taxon>Neoptera</taxon>
        <taxon>Endopterygota</taxon>
        <taxon>Diptera</taxon>
        <taxon>Brachycera</taxon>
        <taxon>Muscomorpha</taxon>
        <taxon>Ephydroidea</taxon>
        <taxon>Drosophilidae</taxon>
        <taxon>Drosophila</taxon>
        <taxon>Sophophora</taxon>
    </lineage>
</organism>
<name>SMO_DROME</name>